<evidence type="ECO:0000255" key="1">
    <source>
        <dbReference type="HAMAP-Rule" id="MF_00380"/>
    </source>
</evidence>
<protein>
    <recommendedName>
        <fullName evidence="1">Integration host factor subunit alpha</fullName>
        <shortName evidence="1">IHF-alpha</shortName>
    </recommendedName>
</protein>
<name>IHFA_BUCAP</name>
<gene>
    <name evidence="1" type="primary">ihfA</name>
    <name evidence="1" type="synonym">himA</name>
    <name type="ordered locus">BUsg_123</name>
</gene>
<keyword id="KW-0233">DNA recombination</keyword>
<keyword id="KW-0238">DNA-binding</keyword>
<keyword id="KW-0804">Transcription</keyword>
<keyword id="KW-0805">Transcription regulation</keyword>
<keyword id="KW-0810">Translation regulation</keyword>
<sequence length="100" mass="11807">MVVTKAAISENLFEKLKLTKRDSKEFVEFFFEEVRKSLEKGEDVKLSGFGNFQLKNKKERPGRNPRTGENILITQRRVVIFKAGQKLKNRVEHYLMKVKY</sequence>
<comment type="function">
    <text evidence="1">This protein is one of the two subunits of integration host factor, a specific DNA-binding protein that functions in genetic recombination as well as in transcriptional and translational control.</text>
</comment>
<comment type="subunit">
    <text evidence="1">Heterodimer of an alpha and a beta chain.</text>
</comment>
<comment type="similarity">
    <text evidence="1">Belongs to the bacterial histone-like protein family.</text>
</comment>
<feature type="chain" id="PRO_0000105004" description="Integration host factor subunit alpha">
    <location>
        <begin position="1"/>
        <end position="100"/>
    </location>
</feature>
<accession>Q8KA11</accession>
<organism>
    <name type="scientific">Buchnera aphidicola subsp. Schizaphis graminum (strain Sg)</name>
    <dbReference type="NCBI Taxonomy" id="198804"/>
    <lineage>
        <taxon>Bacteria</taxon>
        <taxon>Pseudomonadati</taxon>
        <taxon>Pseudomonadota</taxon>
        <taxon>Gammaproteobacteria</taxon>
        <taxon>Enterobacterales</taxon>
        <taxon>Erwiniaceae</taxon>
        <taxon>Buchnera</taxon>
    </lineage>
</organism>
<reference key="1">
    <citation type="journal article" date="2002" name="Science">
        <title>50 million years of genomic stasis in endosymbiotic bacteria.</title>
        <authorList>
            <person name="Tamas I."/>
            <person name="Klasson L."/>
            <person name="Canbaeck B."/>
            <person name="Naeslund A.K."/>
            <person name="Eriksson A.-S."/>
            <person name="Wernegreen J.J."/>
            <person name="Sandstroem J.P."/>
            <person name="Moran N.A."/>
            <person name="Andersson S.G.E."/>
        </authorList>
    </citation>
    <scope>NUCLEOTIDE SEQUENCE [LARGE SCALE GENOMIC DNA]</scope>
    <source>
        <strain>Sg</strain>
    </source>
</reference>
<dbReference type="EMBL" id="AE013218">
    <property type="protein sequence ID" value="AAM67691.1"/>
    <property type="molecule type" value="Genomic_DNA"/>
</dbReference>
<dbReference type="RefSeq" id="WP_011053658.1">
    <property type="nucleotide sequence ID" value="NC_004061.1"/>
</dbReference>
<dbReference type="SMR" id="Q8KA11"/>
<dbReference type="STRING" id="198804.BUsg_123"/>
<dbReference type="GeneID" id="93003593"/>
<dbReference type="KEGG" id="bas:BUsg_123"/>
<dbReference type="eggNOG" id="COG0776">
    <property type="taxonomic scope" value="Bacteria"/>
</dbReference>
<dbReference type="HOGENOM" id="CLU_105066_1_3_6"/>
<dbReference type="Proteomes" id="UP000000416">
    <property type="component" value="Chromosome"/>
</dbReference>
<dbReference type="GO" id="GO:0005829">
    <property type="term" value="C:cytosol"/>
    <property type="evidence" value="ECO:0007669"/>
    <property type="project" value="TreeGrafter"/>
</dbReference>
<dbReference type="GO" id="GO:0003677">
    <property type="term" value="F:DNA binding"/>
    <property type="evidence" value="ECO:0007669"/>
    <property type="project" value="UniProtKB-UniRule"/>
</dbReference>
<dbReference type="GO" id="GO:0030527">
    <property type="term" value="F:structural constituent of chromatin"/>
    <property type="evidence" value="ECO:0007669"/>
    <property type="project" value="InterPro"/>
</dbReference>
<dbReference type="GO" id="GO:0006310">
    <property type="term" value="P:DNA recombination"/>
    <property type="evidence" value="ECO:0007669"/>
    <property type="project" value="UniProtKB-UniRule"/>
</dbReference>
<dbReference type="GO" id="GO:0009893">
    <property type="term" value="P:positive regulation of metabolic process"/>
    <property type="evidence" value="ECO:0007669"/>
    <property type="project" value="UniProtKB-ARBA"/>
</dbReference>
<dbReference type="GO" id="GO:0006355">
    <property type="term" value="P:regulation of DNA-templated transcription"/>
    <property type="evidence" value="ECO:0007669"/>
    <property type="project" value="UniProtKB-UniRule"/>
</dbReference>
<dbReference type="GO" id="GO:0006417">
    <property type="term" value="P:regulation of translation"/>
    <property type="evidence" value="ECO:0007669"/>
    <property type="project" value="UniProtKB-UniRule"/>
</dbReference>
<dbReference type="CDD" id="cd13835">
    <property type="entry name" value="IHF_A"/>
    <property type="match status" value="1"/>
</dbReference>
<dbReference type="Gene3D" id="4.10.520.10">
    <property type="entry name" value="IHF-like DNA-binding proteins"/>
    <property type="match status" value="1"/>
</dbReference>
<dbReference type="HAMAP" id="MF_00380">
    <property type="entry name" value="IHF_alpha"/>
    <property type="match status" value="1"/>
</dbReference>
<dbReference type="InterPro" id="IPR000119">
    <property type="entry name" value="Hist_DNA-bd"/>
</dbReference>
<dbReference type="InterPro" id="IPR020816">
    <property type="entry name" value="Histone-like_DNA-bd_CS"/>
</dbReference>
<dbReference type="InterPro" id="IPR010992">
    <property type="entry name" value="IHF-like_DNA-bd_dom_sf"/>
</dbReference>
<dbReference type="InterPro" id="IPR005684">
    <property type="entry name" value="IHF_alpha"/>
</dbReference>
<dbReference type="NCBIfam" id="TIGR00987">
    <property type="entry name" value="himA"/>
    <property type="match status" value="1"/>
</dbReference>
<dbReference type="NCBIfam" id="NF001401">
    <property type="entry name" value="PRK00285.1"/>
    <property type="match status" value="1"/>
</dbReference>
<dbReference type="PANTHER" id="PTHR33175">
    <property type="entry name" value="DNA-BINDING PROTEIN HU"/>
    <property type="match status" value="1"/>
</dbReference>
<dbReference type="PANTHER" id="PTHR33175:SF2">
    <property type="entry name" value="INTEGRATION HOST FACTOR SUBUNIT ALPHA"/>
    <property type="match status" value="1"/>
</dbReference>
<dbReference type="Pfam" id="PF00216">
    <property type="entry name" value="Bac_DNA_binding"/>
    <property type="match status" value="1"/>
</dbReference>
<dbReference type="PRINTS" id="PR01727">
    <property type="entry name" value="DNABINDINGHU"/>
</dbReference>
<dbReference type="SMART" id="SM00411">
    <property type="entry name" value="BHL"/>
    <property type="match status" value="1"/>
</dbReference>
<dbReference type="SUPFAM" id="SSF47729">
    <property type="entry name" value="IHF-like DNA-binding proteins"/>
    <property type="match status" value="1"/>
</dbReference>
<dbReference type="PROSITE" id="PS00045">
    <property type="entry name" value="HISTONE_LIKE"/>
    <property type="match status" value="1"/>
</dbReference>
<proteinExistence type="inferred from homology"/>